<protein>
    <recommendedName>
        <fullName evidence="3">Periviscerokinin-1</fullName>
        <shortName evidence="3">DerIn-PVK-1</shortName>
    </recommendedName>
</protein>
<accession>P85587</accession>
<keyword id="KW-0027">Amidation</keyword>
<keyword id="KW-0903">Direct protein sequencing</keyword>
<keyword id="KW-0527">Neuropeptide</keyword>
<keyword id="KW-0964">Secreted</keyword>
<comment type="function">
    <text evidence="4">Mediates visceral muscle contractile activity (myotropic activity).</text>
</comment>
<comment type="subcellular location">
    <subcellularLocation>
        <location evidence="4">Secreted</location>
    </subcellularLocation>
</comment>
<comment type="similarity">
    <text evidence="1">Belongs to the periviscerokinin family.</text>
</comment>
<organism>
    <name type="scientific">Deropeltis integerrima</name>
    <name type="common">Cockroach</name>
    <name type="synonym">Deropeltis cf. schweinfurthii (strain SR-2005)</name>
    <dbReference type="NCBI Taxonomy" id="596121"/>
    <lineage>
        <taxon>Eukaryota</taxon>
        <taxon>Metazoa</taxon>
        <taxon>Ecdysozoa</taxon>
        <taxon>Arthropoda</taxon>
        <taxon>Hexapoda</taxon>
        <taxon>Insecta</taxon>
        <taxon>Pterygota</taxon>
        <taxon>Neoptera</taxon>
        <taxon>Polyneoptera</taxon>
        <taxon>Dictyoptera</taxon>
        <taxon>Blattodea</taxon>
        <taxon>Blattoidea</taxon>
        <taxon>Blattidae</taxon>
        <taxon>Blattinae</taxon>
        <taxon>Deropeltis</taxon>
    </lineage>
</organism>
<feature type="peptide" id="PRO_0000378736" description="Periviscerokinin-1" evidence="2">
    <location>
        <begin position="1"/>
        <end position="11"/>
    </location>
</feature>
<feature type="modified residue" description="Asparagine amide" evidence="2">
    <location>
        <position position="11"/>
    </location>
</feature>
<proteinExistence type="evidence at protein level"/>
<reference evidence="4" key="1">
    <citation type="journal article" date="2009" name="BMC Evol. Biol.">
        <title>A proteomic approach for studying insect phylogeny: CAPA peptides of ancient insect taxa (Dictyoptera, Blattoptera) as a test case.</title>
        <authorList>
            <person name="Roth S."/>
            <person name="Fromm B."/>
            <person name="Gaede G."/>
            <person name="Predel R."/>
        </authorList>
    </citation>
    <scope>PROTEIN SEQUENCE</scope>
    <scope>AMIDATION AT ASN-11</scope>
    <source>
        <tissue evidence="2">Abdominal perisympathetic organs</tissue>
    </source>
</reference>
<evidence type="ECO:0000255" key="1"/>
<evidence type="ECO:0000269" key="2">
    <source>
    </source>
</evidence>
<evidence type="ECO:0000303" key="3">
    <source>
    </source>
</evidence>
<evidence type="ECO:0000305" key="4"/>
<sequence>GASGLIPVMRN</sequence>
<name>PVK1_DERIN</name>
<dbReference type="GO" id="GO:0005576">
    <property type="term" value="C:extracellular region"/>
    <property type="evidence" value="ECO:0007669"/>
    <property type="project" value="UniProtKB-SubCell"/>
</dbReference>
<dbReference type="GO" id="GO:0007218">
    <property type="term" value="P:neuropeptide signaling pathway"/>
    <property type="evidence" value="ECO:0007669"/>
    <property type="project" value="UniProtKB-KW"/>
</dbReference>